<name>CLPP3_STRCO</name>
<sequence>MSPFTAGPAPARTPRAEEGDTPATRFDDRLAEQLLDQRIVLLGTQVDEVSANRVCAQLLILSAQDPRTDISLYVNSPGGSVHAGLAIYDTMRLIPNDVSTLAMGFAASMGQFLLSVGTAGKRYALPNARIMMHQPSAGIGGTTADIEIQADNLDFTKRTIERITAEHTGQSPETISRDGDRDRWFTAEEAREYGMVDQVVQSLADVRPAATRRRMGL</sequence>
<reference key="1">
    <citation type="journal article" date="2002" name="Nature">
        <title>Complete genome sequence of the model actinomycete Streptomyces coelicolor A3(2).</title>
        <authorList>
            <person name="Bentley S.D."/>
            <person name="Chater K.F."/>
            <person name="Cerdeno-Tarraga A.-M."/>
            <person name="Challis G.L."/>
            <person name="Thomson N.R."/>
            <person name="James K.D."/>
            <person name="Harris D.E."/>
            <person name="Quail M.A."/>
            <person name="Kieser H."/>
            <person name="Harper D."/>
            <person name="Bateman A."/>
            <person name="Brown S."/>
            <person name="Chandra G."/>
            <person name="Chen C.W."/>
            <person name="Collins M."/>
            <person name="Cronin A."/>
            <person name="Fraser A."/>
            <person name="Goble A."/>
            <person name="Hidalgo J."/>
            <person name="Hornsby T."/>
            <person name="Howarth S."/>
            <person name="Huang C.-H."/>
            <person name="Kieser T."/>
            <person name="Larke L."/>
            <person name="Murphy L.D."/>
            <person name="Oliver K."/>
            <person name="O'Neil S."/>
            <person name="Rabbinowitsch E."/>
            <person name="Rajandream M.A."/>
            <person name="Rutherford K.M."/>
            <person name="Rutter S."/>
            <person name="Seeger K."/>
            <person name="Saunders D."/>
            <person name="Sharp S."/>
            <person name="Squares R."/>
            <person name="Squares S."/>
            <person name="Taylor K."/>
            <person name="Warren T."/>
            <person name="Wietzorrek A."/>
            <person name="Woodward J.R."/>
            <person name="Barrell B.G."/>
            <person name="Parkhill J."/>
            <person name="Hopwood D.A."/>
        </authorList>
    </citation>
    <scope>NUCLEOTIDE SEQUENCE [LARGE SCALE GENOMIC DNA]</scope>
    <source>
        <strain>ATCC BAA-471 / A3(2) / M145</strain>
    </source>
</reference>
<protein>
    <recommendedName>
        <fullName evidence="1">ATP-dependent Clp protease proteolytic subunit 3</fullName>
        <ecNumber evidence="1">3.4.21.92</ecNumber>
    </recommendedName>
    <alternativeName>
        <fullName evidence="1">Endopeptidase Clp 3</fullName>
    </alternativeName>
</protein>
<feature type="chain" id="PRO_0000179666" description="ATP-dependent Clp protease proteolytic subunit 3">
    <location>
        <begin position="1"/>
        <end position="217"/>
    </location>
</feature>
<feature type="region of interest" description="Disordered" evidence="2">
    <location>
        <begin position="1"/>
        <end position="23"/>
    </location>
</feature>
<feature type="compositionally biased region" description="Low complexity" evidence="2">
    <location>
        <begin position="1"/>
        <end position="13"/>
    </location>
</feature>
<feature type="active site" description="Nucleophile" evidence="1">
    <location>
        <position position="108"/>
    </location>
</feature>
<feature type="active site" evidence="1">
    <location>
        <position position="133"/>
    </location>
</feature>
<dbReference type="EC" id="3.4.21.92" evidence="1"/>
<dbReference type="EMBL" id="AL939131">
    <property type="protein sequence ID" value="CAB42936.1"/>
    <property type="molecule type" value="Genomic_DNA"/>
</dbReference>
<dbReference type="PIR" id="T35327">
    <property type="entry name" value="T35327"/>
</dbReference>
<dbReference type="RefSeq" id="NP_631337.1">
    <property type="nucleotide sequence ID" value="NC_003888.3"/>
</dbReference>
<dbReference type="RefSeq" id="WP_003971862.1">
    <property type="nucleotide sequence ID" value="NZ_VNID01000019.1"/>
</dbReference>
<dbReference type="SMR" id="Q9X7R9"/>
<dbReference type="STRING" id="100226.gene:17764941"/>
<dbReference type="MEROPS" id="S14.008"/>
<dbReference type="PaxDb" id="100226-SCO7281"/>
<dbReference type="KEGG" id="sco:SCO7281"/>
<dbReference type="PATRIC" id="fig|100226.15.peg.7383"/>
<dbReference type="eggNOG" id="COG0740">
    <property type="taxonomic scope" value="Bacteria"/>
</dbReference>
<dbReference type="HOGENOM" id="CLU_058707_4_1_11"/>
<dbReference type="InParanoid" id="Q9X7R9"/>
<dbReference type="OrthoDB" id="9802800at2"/>
<dbReference type="PhylomeDB" id="Q9X7R9"/>
<dbReference type="Proteomes" id="UP000001973">
    <property type="component" value="Chromosome"/>
</dbReference>
<dbReference type="GO" id="GO:0005737">
    <property type="term" value="C:cytoplasm"/>
    <property type="evidence" value="ECO:0007669"/>
    <property type="project" value="UniProtKB-SubCell"/>
</dbReference>
<dbReference type="GO" id="GO:0009368">
    <property type="term" value="C:endopeptidase Clp complex"/>
    <property type="evidence" value="ECO:0000318"/>
    <property type="project" value="GO_Central"/>
</dbReference>
<dbReference type="GO" id="GO:0004176">
    <property type="term" value="F:ATP-dependent peptidase activity"/>
    <property type="evidence" value="ECO:0000318"/>
    <property type="project" value="GO_Central"/>
</dbReference>
<dbReference type="GO" id="GO:0051117">
    <property type="term" value="F:ATPase binding"/>
    <property type="evidence" value="ECO:0000318"/>
    <property type="project" value="GO_Central"/>
</dbReference>
<dbReference type="GO" id="GO:0004252">
    <property type="term" value="F:serine-type endopeptidase activity"/>
    <property type="evidence" value="ECO:0000318"/>
    <property type="project" value="GO_Central"/>
</dbReference>
<dbReference type="GO" id="GO:0006515">
    <property type="term" value="P:protein quality control for misfolded or incompletely synthesized proteins"/>
    <property type="evidence" value="ECO:0000318"/>
    <property type="project" value="GO_Central"/>
</dbReference>
<dbReference type="CDD" id="cd07017">
    <property type="entry name" value="S14_ClpP_2"/>
    <property type="match status" value="1"/>
</dbReference>
<dbReference type="FunFam" id="3.90.226.10:FF:000002">
    <property type="entry name" value="ATP-dependent Clp protease proteolytic subunit"/>
    <property type="match status" value="1"/>
</dbReference>
<dbReference type="Gene3D" id="3.90.226.10">
    <property type="entry name" value="2-enoyl-CoA Hydratase, Chain A, domain 1"/>
    <property type="match status" value="1"/>
</dbReference>
<dbReference type="HAMAP" id="MF_00444">
    <property type="entry name" value="ClpP"/>
    <property type="match status" value="1"/>
</dbReference>
<dbReference type="InterPro" id="IPR001907">
    <property type="entry name" value="ClpP"/>
</dbReference>
<dbReference type="InterPro" id="IPR029045">
    <property type="entry name" value="ClpP/crotonase-like_dom_sf"/>
</dbReference>
<dbReference type="InterPro" id="IPR023562">
    <property type="entry name" value="ClpP/TepA"/>
</dbReference>
<dbReference type="InterPro" id="IPR033135">
    <property type="entry name" value="ClpP_His_AS"/>
</dbReference>
<dbReference type="NCBIfam" id="NF001368">
    <property type="entry name" value="PRK00277.1"/>
    <property type="match status" value="1"/>
</dbReference>
<dbReference type="NCBIfam" id="NF009205">
    <property type="entry name" value="PRK12553.1"/>
    <property type="match status" value="1"/>
</dbReference>
<dbReference type="PANTHER" id="PTHR10381">
    <property type="entry name" value="ATP-DEPENDENT CLP PROTEASE PROTEOLYTIC SUBUNIT"/>
    <property type="match status" value="1"/>
</dbReference>
<dbReference type="PANTHER" id="PTHR10381:SF70">
    <property type="entry name" value="ATP-DEPENDENT CLP PROTEASE PROTEOLYTIC SUBUNIT"/>
    <property type="match status" value="1"/>
</dbReference>
<dbReference type="Pfam" id="PF00574">
    <property type="entry name" value="CLP_protease"/>
    <property type="match status" value="1"/>
</dbReference>
<dbReference type="PRINTS" id="PR00127">
    <property type="entry name" value="CLPPROTEASEP"/>
</dbReference>
<dbReference type="SUPFAM" id="SSF52096">
    <property type="entry name" value="ClpP/crotonase"/>
    <property type="match status" value="1"/>
</dbReference>
<dbReference type="PROSITE" id="PS00382">
    <property type="entry name" value="CLP_PROTEASE_HIS"/>
    <property type="match status" value="1"/>
</dbReference>
<evidence type="ECO:0000255" key="1">
    <source>
        <dbReference type="HAMAP-Rule" id="MF_00444"/>
    </source>
</evidence>
<evidence type="ECO:0000256" key="2">
    <source>
        <dbReference type="SAM" id="MobiDB-lite"/>
    </source>
</evidence>
<keyword id="KW-0963">Cytoplasm</keyword>
<keyword id="KW-0378">Hydrolase</keyword>
<keyword id="KW-0645">Protease</keyword>
<keyword id="KW-1185">Reference proteome</keyword>
<keyword id="KW-0720">Serine protease</keyword>
<proteinExistence type="inferred from homology"/>
<organism>
    <name type="scientific">Streptomyces coelicolor (strain ATCC BAA-471 / A3(2) / M145)</name>
    <dbReference type="NCBI Taxonomy" id="100226"/>
    <lineage>
        <taxon>Bacteria</taxon>
        <taxon>Bacillati</taxon>
        <taxon>Actinomycetota</taxon>
        <taxon>Actinomycetes</taxon>
        <taxon>Kitasatosporales</taxon>
        <taxon>Streptomycetaceae</taxon>
        <taxon>Streptomyces</taxon>
        <taxon>Streptomyces albidoflavus group</taxon>
    </lineage>
</organism>
<accession>Q9X7R9</accession>
<gene>
    <name evidence="1" type="primary">clpP3</name>
    <name type="ordered locus">SCO7281</name>
    <name type="ORF">SC5H1.11</name>
</gene>
<comment type="function">
    <text evidence="1">Cleaves peptides in various proteins in a process that requires ATP hydrolysis. Has a chymotrypsin-like activity. Plays a major role in the degradation of misfolded proteins.</text>
</comment>
<comment type="catalytic activity">
    <reaction evidence="1">
        <text>Hydrolysis of proteins to small peptides in the presence of ATP and magnesium. alpha-casein is the usual test substrate. In the absence of ATP, only oligopeptides shorter than five residues are hydrolyzed (such as succinyl-Leu-Tyr-|-NHMec, and Leu-Tyr-Leu-|-Tyr-Trp, in which cleavage of the -Tyr-|-Leu- and -Tyr-|-Trp bonds also occurs).</text>
        <dbReference type="EC" id="3.4.21.92"/>
    </reaction>
</comment>
<comment type="subunit">
    <text evidence="1">Fourteen ClpP subunits assemble into 2 heptameric rings which stack back to back to give a disk-like structure with a central cavity, resembling the structure of eukaryotic proteasomes.</text>
</comment>
<comment type="subcellular location">
    <subcellularLocation>
        <location evidence="1">Cytoplasm</location>
    </subcellularLocation>
</comment>
<comment type="similarity">
    <text evidence="1">Belongs to the peptidase S14 family.</text>
</comment>